<protein>
    <recommendedName>
        <fullName evidence="1">Small ribosomal subunit protein uS11c</fullName>
    </recommendedName>
    <alternativeName>
        <fullName evidence="2">30S ribosomal protein S11, chloroplastic</fullName>
    </alternativeName>
</protein>
<proteinExistence type="inferred from homology"/>
<gene>
    <name evidence="1" type="primary">rps11</name>
    <name type="ORF">9311100</name>
</gene>
<comment type="subunit">
    <text evidence="1">Part of the 30S ribosomal subunit.</text>
</comment>
<comment type="subcellular location">
    <subcellularLocation>
        <location>Plastid</location>
        <location>Chloroplast</location>
    </subcellularLocation>
</comment>
<comment type="similarity">
    <text evidence="1">Belongs to the universal ribosomal protein uS11 family.</text>
</comment>
<sequence length="143" mass="15624">MTKAIPKIGSRRKVRIGLRRNARFSLRKSARRITKGVIHVQASFNNTIITVTDPQGRVVFWSSAGTCGFKSSRKASPYAGQRTAVDAIRTVGLQRAEVMVKGAGSGRDAALRAIAKSGVRLSCIRDVTPMPHNGCRPPKKRRL</sequence>
<dbReference type="EMBL" id="AY522329">
    <property type="protein sequence ID" value="AAS46076.1"/>
    <property type="molecule type" value="Genomic_DNA"/>
</dbReference>
<dbReference type="RefSeq" id="YP_009161396.1">
    <property type="nucleotide sequence ID" value="NC_027678.1"/>
</dbReference>
<dbReference type="RefSeq" id="YP_654236.1">
    <property type="nucleotide sequence ID" value="NC_008155.1"/>
</dbReference>
<dbReference type="SMR" id="P0C463"/>
<dbReference type="STRING" id="39946.P0C463"/>
<dbReference type="GeneID" id="4126926"/>
<dbReference type="Proteomes" id="UP000007015">
    <property type="component" value="Chloroplast"/>
</dbReference>
<dbReference type="GO" id="GO:0009507">
    <property type="term" value="C:chloroplast"/>
    <property type="evidence" value="ECO:0007669"/>
    <property type="project" value="UniProtKB-SubCell"/>
</dbReference>
<dbReference type="GO" id="GO:0009536">
    <property type="term" value="C:plastid"/>
    <property type="evidence" value="ECO:0000305"/>
    <property type="project" value="Gramene"/>
</dbReference>
<dbReference type="GO" id="GO:1990904">
    <property type="term" value="C:ribonucleoprotein complex"/>
    <property type="evidence" value="ECO:0007669"/>
    <property type="project" value="UniProtKB-KW"/>
</dbReference>
<dbReference type="GO" id="GO:0005840">
    <property type="term" value="C:ribosome"/>
    <property type="evidence" value="ECO:0007669"/>
    <property type="project" value="UniProtKB-KW"/>
</dbReference>
<dbReference type="GO" id="GO:0019843">
    <property type="term" value="F:rRNA binding"/>
    <property type="evidence" value="ECO:0007669"/>
    <property type="project" value="UniProtKB-UniRule"/>
</dbReference>
<dbReference type="GO" id="GO:0003735">
    <property type="term" value="F:structural constituent of ribosome"/>
    <property type="evidence" value="ECO:0007669"/>
    <property type="project" value="InterPro"/>
</dbReference>
<dbReference type="GO" id="GO:0006412">
    <property type="term" value="P:translation"/>
    <property type="evidence" value="ECO:0007669"/>
    <property type="project" value="UniProtKB-UniRule"/>
</dbReference>
<dbReference type="FunFam" id="3.30.420.80:FF:000003">
    <property type="entry name" value="30S ribosomal protein S11, chloroplastic"/>
    <property type="match status" value="1"/>
</dbReference>
<dbReference type="Gene3D" id="3.30.420.80">
    <property type="entry name" value="Ribosomal protein S11"/>
    <property type="match status" value="1"/>
</dbReference>
<dbReference type="HAMAP" id="MF_01310">
    <property type="entry name" value="Ribosomal_uS11"/>
    <property type="match status" value="1"/>
</dbReference>
<dbReference type="InterPro" id="IPR001971">
    <property type="entry name" value="Ribosomal_uS11"/>
</dbReference>
<dbReference type="InterPro" id="IPR018102">
    <property type="entry name" value="Ribosomal_uS11_CS"/>
</dbReference>
<dbReference type="InterPro" id="IPR036967">
    <property type="entry name" value="Ribosomal_uS11_sf"/>
</dbReference>
<dbReference type="NCBIfam" id="NF003698">
    <property type="entry name" value="PRK05309.1"/>
    <property type="match status" value="1"/>
</dbReference>
<dbReference type="PANTHER" id="PTHR11759">
    <property type="entry name" value="40S RIBOSOMAL PROTEIN S14/30S RIBOSOMAL PROTEIN S11"/>
    <property type="match status" value="1"/>
</dbReference>
<dbReference type="Pfam" id="PF00411">
    <property type="entry name" value="Ribosomal_S11"/>
    <property type="match status" value="1"/>
</dbReference>
<dbReference type="PIRSF" id="PIRSF002131">
    <property type="entry name" value="Ribosomal_S11"/>
    <property type="match status" value="1"/>
</dbReference>
<dbReference type="SUPFAM" id="SSF53137">
    <property type="entry name" value="Translational machinery components"/>
    <property type="match status" value="1"/>
</dbReference>
<dbReference type="PROSITE" id="PS00054">
    <property type="entry name" value="RIBOSOMAL_S11"/>
    <property type="match status" value="1"/>
</dbReference>
<evidence type="ECO:0000255" key="1">
    <source>
        <dbReference type="HAMAP-Rule" id="MF_01310"/>
    </source>
</evidence>
<evidence type="ECO:0000305" key="2"/>
<reference key="1">
    <citation type="journal article" date="2004" name="Plant Physiol.">
        <title>A comparison of rice chloroplast genomes.</title>
        <authorList>
            <person name="Tang J."/>
            <person name="Xia H."/>
            <person name="Cao M."/>
            <person name="Zhang X."/>
            <person name="Zeng W."/>
            <person name="Hu S."/>
            <person name="Tong W."/>
            <person name="Wang J."/>
            <person name="Wang J."/>
            <person name="Yu J."/>
            <person name="Yang H."/>
            <person name="Zhu L."/>
        </authorList>
    </citation>
    <scope>NUCLEOTIDE SEQUENCE [LARGE SCALE GENOMIC DNA]</scope>
    <source>
        <strain>cv. 93-11</strain>
    </source>
</reference>
<keyword id="KW-0150">Chloroplast</keyword>
<keyword id="KW-0934">Plastid</keyword>
<keyword id="KW-1185">Reference proteome</keyword>
<keyword id="KW-0687">Ribonucleoprotein</keyword>
<keyword id="KW-0689">Ribosomal protein</keyword>
<keyword id="KW-0694">RNA-binding</keyword>
<keyword id="KW-0699">rRNA-binding</keyword>
<geneLocation type="chloroplast"/>
<name>RR11_ORYSI</name>
<organism>
    <name type="scientific">Oryza sativa subsp. indica</name>
    <name type="common">Rice</name>
    <dbReference type="NCBI Taxonomy" id="39946"/>
    <lineage>
        <taxon>Eukaryota</taxon>
        <taxon>Viridiplantae</taxon>
        <taxon>Streptophyta</taxon>
        <taxon>Embryophyta</taxon>
        <taxon>Tracheophyta</taxon>
        <taxon>Spermatophyta</taxon>
        <taxon>Magnoliopsida</taxon>
        <taxon>Liliopsida</taxon>
        <taxon>Poales</taxon>
        <taxon>Poaceae</taxon>
        <taxon>BOP clade</taxon>
        <taxon>Oryzoideae</taxon>
        <taxon>Oryzeae</taxon>
        <taxon>Oryzinae</taxon>
        <taxon>Oryza</taxon>
        <taxon>Oryza sativa</taxon>
    </lineage>
</organism>
<feature type="chain" id="PRO_0000290060" description="Small ribosomal subunit protein uS11c">
    <location>
        <begin position="1"/>
        <end position="143"/>
    </location>
</feature>
<accession>P0C463</accession>
<accession>P12096</accession>
<accession>Q6QXY9</accession>
<accession>Q6QY53</accession>